<sequence>MFSLSFIVIAVIIIVALLILFSFVPIGLWISALAAGVHVGIGTLVGMRLRRVSPRKVIAPLIKAHKAGLALTTNQLESHYLAGGNVDRVVDANIAAQRADIDLPFERAAAIDLAGRDVLEAVQMSVNPKVIETPFIAGVAMNGIEVKAKARITVRANIARLVGGAGEETIIARVGEGIVSTIGSSKHHTEVLENPDNISKTVLSKGLDSGTAFEILSIDIADVDISKNIGADLQTEQALADKNIAQAKAEERRAMAVATEQEMKARVQEMHAKVVEAESEVPLAMAEALRSGNISVKDYYNLKNIEADTGMRNAINKRTDQSDDESPEH</sequence>
<gene>
    <name evidence="1" type="primary">floA</name>
    <name type="ordered locus">SaurJH1_1665</name>
</gene>
<name>FLOA_STAA2</name>
<keyword id="KW-1003">Cell membrane</keyword>
<keyword id="KW-0472">Membrane</keyword>
<keyword id="KW-0812">Transmembrane</keyword>
<keyword id="KW-1133">Transmembrane helix</keyword>
<reference key="1">
    <citation type="submission" date="2007-06" db="EMBL/GenBank/DDBJ databases">
        <title>Complete sequence of chromosome of Staphylococcus aureus subsp. aureus JH1.</title>
        <authorList>
            <consortium name="US DOE Joint Genome Institute"/>
            <person name="Copeland A."/>
            <person name="Lucas S."/>
            <person name="Lapidus A."/>
            <person name="Barry K."/>
            <person name="Detter J.C."/>
            <person name="Glavina del Rio T."/>
            <person name="Hammon N."/>
            <person name="Israni S."/>
            <person name="Dalin E."/>
            <person name="Tice H."/>
            <person name="Pitluck S."/>
            <person name="Chain P."/>
            <person name="Malfatti S."/>
            <person name="Shin M."/>
            <person name="Vergez L."/>
            <person name="Schmutz J."/>
            <person name="Larimer F."/>
            <person name="Land M."/>
            <person name="Hauser L."/>
            <person name="Kyrpides N."/>
            <person name="Ivanova N."/>
            <person name="Tomasz A."/>
            <person name="Richardson P."/>
        </authorList>
    </citation>
    <scope>NUCLEOTIDE SEQUENCE [LARGE SCALE GENOMIC DNA]</scope>
    <source>
        <strain>JH1</strain>
    </source>
</reference>
<feature type="chain" id="PRO_1000087812" description="Flotillin-like protein FloA">
    <location>
        <begin position="1"/>
        <end position="329"/>
    </location>
</feature>
<feature type="transmembrane region" description="Helical" evidence="1">
    <location>
        <begin position="6"/>
        <end position="26"/>
    </location>
</feature>
<feature type="transmembrane region" description="Helical" evidence="1">
    <location>
        <begin position="27"/>
        <end position="47"/>
    </location>
</feature>
<accession>A6U245</accession>
<protein>
    <recommendedName>
        <fullName evidence="1">Flotillin-like protein FloA</fullName>
    </recommendedName>
</protein>
<proteinExistence type="inferred from homology"/>
<organism>
    <name type="scientific">Staphylococcus aureus (strain JH1)</name>
    <dbReference type="NCBI Taxonomy" id="359787"/>
    <lineage>
        <taxon>Bacteria</taxon>
        <taxon>Bacillati</taxon>
        <taxon>Bacillota</taxon>
        <taxon>Bacilli</taxon>
        <taxon>Bacillales</taxon>
        <taxon>Staphylococcaceae</taxon>
        <taxon>Staphylococcus</taxon>
    </lineage>
</organism>
<comment type="function">
    <text evidence="1">Found in functional membrane microdomains (FMM) that may be equivalent to eukaryotic membrane rafts. FMMs are highly dynamic and increase in number as cells age. Flotillins are thought to be important factors in membrane fluidity.</text>
</comment>
<comment type="subunit">
    <text evidence="1">Homooligomerizes.</text>
</comment>
<comment type="subcellular location">
    <subcellularLocation>
        <location evidence="1">Cell membrane</location>
        <topology evidence="1">Multi-pass membrane protein</topology>
    </subcellularLocation>
    <subcellularLocation>
        <location evidence="1">Membrane raft</location>
        <topology evidence="1">Multi-pass membrane protein</topology>
    </subcellularLocation>
</comment>
<comment type="similarity">
    <text evidence="1">Belongs to the flotillin-like FloA family.</text>
</comment>
<evidence type="ECO:0000255" key="1">
    <source>
        <dbReference type="HAMAP-Rule" id="MF_01562"/>
    </source>
</evidence>
<dbReference type="EMBL" id="CP000736">
    <property type="protein sequence ID" value="ABR52513.1"/>
    <property type="molecule type" value="Genomic_DNA"/>
</dbReference>
<dbReference type="SMR" id="A6U245"/>
<dbReference type="KEGG" id="sah:SaurJH1_1665"/>
<dbReference type="HOGENOM" id="CLU_836378_0_0_9"/>
<dbReference type="GO" id="GO:0045121">
    <property type="term" value="C:membrane raft"/>
    <property type="evidence" value="ECO:0007669"/>
    <property type="project" value="UniProtKB-SubCell"/>
</dbReference>
<dbReference type="GO" id="GO:0005886">
    <property type="term" value="C:plasma membrane"/>
    <property type="evidence" value="ECO:0007669"/>
    <property type="project" value="UniProtKB-SubCell"/>
</dbReference>
<dbReference type="HAMAP" id="MF_01562">
    <property type="entry name" value="FloA"/>
    <property type="match status" value="1"/>
</dbReference>
<dbReference type="InterPro" id="IPR022853">
    <property type="entry name" value="FloA"/>
</dbReference>
<dbReference type="NCBIfam" id="NF010186">
    <property type="entry name" value="PRK13665.1"/>
    <property type="match status" value="1"/>
</dbReference>
<dbReference type="Pfam" id="PF12127">
    <property type="entry name" value="FloA"/>
    <property type="match status" value="1"/>
</dbReference>